<gene>
    <name evidence="1" type="primary">rpsR</name>
    <name type="ordered locus">Emin_1356</name>
</gene>
<feature type="chain" id="PRO_1000119281" description="Small ribosomal subunit protein bS18">
    <location>
        <begin position="1"/>
        <end position="113"/>
    </location>
</feature>
<feature type="region of interest" description="Disordered" evidence="2">
    <location>
        <begin position="1"/>
        <end position="41"/>
    </location>
</feature>
<feature type="compositionally biased region" description="Basic and acidic residues" evidence="2">
    <location>
        <begin position="16"/>
        <end position="33"/>
    </location>
</feature>
<dbReference type="EMBL" id="CP001055">
    <property type="protein sequence ID" value="ACC98906.1"/>
    <property type="molecule type" value="Genomic_DNA"/>
</dbReference>
<dbReference type="RefSeq" id="WP_012415521.1">
    <property type="nucleotide sequence ID" value="NC_010644.1"/>
</dbReference>
<dbReference type="SMR" id="B2KEG0"/>
<dbReference type="STRING" id="445932.Emin_1356"/>
<dbReference type="KEGG" id="emi:Emin_1356"/>
<dbReference type="HOGENOM" id="CLU_148710_0_0_0"/>
<dbReference type="OrthoDB" id="9812008at2"/>
<dbReference type="Proteomes" id="UP000001029">
    <property type="component" value="Chromosome"/>
</dbReference>
<dbReference type="GO" id="GO:0022627">
    <property type="term" value="C:cytosolic small ribosomal subunit"/>
    <property type="evidence" value="ECO:0007669"/>
    <property type="project" value="TreeGrafter"/>
</dbReference>
<dbReference type="GO" id="GO:0070181">
    <property type="term" value="F:small ribosomal subunit rRNA binding"/>
    <property type="evidence" value="ECO:0007669"/>
    <property type="project" value="TreeGrafter"/>
</dbReference>
<dbReference type="GO" id="GO:0003735">
    <property type="term" value="F:structural constituent of ribosome"/>
    <property type="evidence" value="ECO:0007669"/>
    <property type="project" value="InterPro"/>
</dbReference>
<dbReference type="GO" id="GO:0006412">
    <property type="term" value="P:translation"/>
    <property type="evidence" value="ECO:0007669"/>
    <property type="project" value="UniProtKB-UniRule"/>
</dbReference>
<dbReference type="Gene3D" id="4.10.640.10">
    <property type="entry name" value="Ribosomal protein S18"/>
    <property type="match status" value="1"/>
</dbReference>
<dbReference type="HAMAP" id="MF_00270">
    <property type="entry name" value="Ribosomal_bS18"/>
    <property type="match status" value="1"/>
</dbReference>
<dbReference type="InterPro" id="IPR001648">
    <property type="entry name" value="Ribosomal_bS18"/>
</dbReference>
<dbReference type="InterPro" id="IPR036870">
    <property type="entry name" value="Ribosomal_bS18_sf"/>
</dbReference>
<dbReference type="NCBIfam" id="TIGR00165">
    <property type="entry name" value="S18"/>
    <property type="match status" value="1"/>
</dbReference>
<dbReference type="PANTHER" id="PTHR13479">
    <property type="entry name" value="30S RIBOSOMAL PROTEIN S18"/>
    <property type="match status" value="1"/>
</dbReference>
<dbReference type="PANTHER" id="PTHR13479:SF40">
    <property type="entry name" value="SMALL RIBOSOMAL SUBUNIT PROTEIN BS18M"/>
    <property type="match status" value="1"/>
</dbReference>
<dbReference type="Pfam" id="PF01084">
    <property type="entry name" value="Ribosomal_S18"/>
    <property type="match status" value="1"/>
</dbReference>
<dbReference type="PRINTS" id="PR00974">
    <property type="entry name" value="RIBOSOMALS18"/>
</dbReference>
<dbReference type="SUPFAM" id="SSF46911">
    <property type="entry name" value="Ribosomal protein S18"/>
    <property type="match status" value="1"/>
</dbReference>
<accession>B2KEG0</accession>
<evidence type="ECO:0000255" key="1">
    <source>
        <dbReference type="HAMAP-Rule" id="MF_00270"/>
    </source>
</evidence>
<evidence type="ECO:0000256" key="2">
    <source>
        <dbReference type="SAM" id="MobiDB-lite"/>
    </source>
</evidence>
<evidence type="ECO:0000305" key="3"/>
<comment type="function">
    <text evidence="1">Binds as a heterodimer with protein bS6 to the central domain of the 16S rRNA, where it helps stabilize the platform of the 30S subunit.</text>
</comment>
<comment type="subunit">
    <text evidence="1">Part of the 30S ribosomal subunit. Forms a tight heterodimer with protein bS6.</text>
</comment>
<comment type="similarity">
    <text evidence="1">Belongs to the bacterial ribosomal protein bS18 family.</text>
</comment>
<protein>
    <recommendedName>
        <fullName evidence="1">Small ribosomal subunit protein bS18</fullName>
    </recommendedName>
    <alternativeName>
        <fullName evidence="3">30S ribosomal protein S18</fullName>
    </alternativeName>
</protein>
<name>RS18_ELUMP</name>
<organism>
    <name type="scientific">Elusimicrobium minutum (strain Pei191)</name>
    <dbReference type="NCBI Taxonomy" id="445932"/>
    <lineage>
        <taxon>Bacteria</taxon>
        <taxon>Pseudomonadati</taxon>
        <taxon>Elusimicrobiota</taxon>
        <taxon>Elusimicrobia</taxon>
        <taxon>Elusimicrobiales</taxon>
        <taxon>Elusimicrobiaceae</taxon>
        <taxon>Elusimicrobium</taxon>
    </lineage>
</organism>
<keyword id="KW-1185">Reference proteome</keyword>
<keyword id="KW-0687">Ribonucleoprotein</keyword>
<keyword id="KW-0689">Ribosomal protein</keyword>
<keyword id="KW-0694">RNA-binding</keyword>
<keyword id="KW-0699">rRNA-binding</keyword>
<reference key="1">
    <citation type="journal article" date="2009" name="Appl. Environ. Microbiol.">
        <title>Genomic analysis of 'Elusimicrobium minutum,' the first cultivated representative of the phylum 'Elusimicrobia' (formerly termite group 1).</title>
        <authorList>
            <person name="Herlemann D.P.R."/>
            <person name="Geissinger O."/>
            <person name="Ikeda-Ohtsubo W."/>
            <person name="Kunin V."/>
            <person name="Sun H."/>
            <person name="Lapidus A."/>
            <person name="Hugenholtz P."/>
            <person name="Brune A."/>
        </authorList>
    </citation>
    <scope>NUCLEOTIDE SEQUENCE [LARGE SCALE GENOMIC DNA]</scope>
    <source>
        <strain>Pei191</strain>
    </source>
</reference>
<sequence length="113" mass="12936">MSEEKIVNTEAAPEAVAERPARAERSERPERPAKGPFGKKRFESRRKVCKLCAEKIENVDYKNFQFIKSFTMDSGKILSRRITGTCAKHQRQIASAVKRDRNLAILPYSLPKK</sequence>
<proteinExistence type="inferred from homology"/>